<sequence length="428" mass="46320">MLESLTLQPIALVNGTVNLPGSKSVSNRALLLAALAEGTTQLNNVLDSDDIRHMLNALQALGVNFRLSADRTCCEVDGLGGKLVAEQPLSLFLGNAGTAMRPLAAVLCLGNSDIVLTGEPRMKERPIGHLVDALRQGGAQIDYLEQENYPPLRLRGGFRGGELTVDGRVSSQFLTALLMTAPLAEQDTTIRIMGDLVSKPYIDITLHLMKAFGIDVGHENYQIFHIKGGQTYRSPGTYLVEGDASSASYFLAAAAIKGGTVRVTGIGKKSVQGDTKFADVLEKMGAKVTWGDDYIECSRGELQGIDMDMNHIPDAAMTIATTALFATGPTTIRNIYNWRVKETDRLTAMATELRKVGAEVEEGEDYIRVVPPVQLTAADIGTYDDHRMAMCFSLVALSDTPVTILDPKCTAKTFPDYFEQFARLSQLA</sequence>
<dbReference type="EC" id="2.5.1.19" evidence="1"/>
<dbReference type="EMBL" id="BX936398">
    <property type="protein sequence ID" value="CAH20655.1"/>
    <property type="molecule type" value="Genomic_DNA"/>
</dbReference>
<dbReference type="RefSeq" id="WP_011192056.1">
    <property type="nucleotide sequence ID" value="NC_006155.1"/>
</dbReference>
<dbReference type="SMR" id="Q66CI8"/>
<dbReference type="GeneID" id="49786502"/>
<dbReference type="KEGG" id="ypo:BZ17_1103"/>
<dbReference type="KEGG" id="yps:YPTB1415"/>
<dbReference type="PATRIC" id="fig|273123.14.peg.1170"/>
<dbReference type="UniPathway" id="UPA00053">
    <property type="reaction ID" value="UER00089"/>
</dbReference>
<dbReference type="Proteomes" id="UP000001011">
    <property type="component" value="Chromosome"/>
</dbReference>
<dbReference type="GO" id="GO:0005737">
    <property type="term" value="C:cytoplasm"/>
    <property type="evidence" value="ECO:0007669"/>
    <property type="project" value="UniProtKB-SubCell"/>
</dbReference>
<dbReference type="GO" id="GO:0003866">
    <property type="term" value="F:3-phosphoshikimate 1-carboxyvinyltransferase activity"/>
    <property type="evidence" value="ECO:0007669"/>
    <property type="project" value="UniProtKB-UniRule"/>
</dbReference>
<dbReference type="GO" id="GO:0008652">
    <property type="term" value="P:amino acid biosynthetic process"/>
    <property type="evidence" value="ECO:0007669"/>
    <property type="project" value="UniProtKB-KW"/>
</dbReference>
<dbReference type="GO" id="GO:0009073">
    <property type="term" value="P:aromatic amino acid family biosynthetic process"/>
    <property type="evidence" value="ECO:0007669"/>
    <property type="project" value="UniProtKB-KW"/>
</dbReference>
<dbReference type="GO" id="GO:0009423">
    <property type="term" value="P:chorismate biosynthetic process"/>
    <property type="evidence" value="ECO:0007669"/>
    <property type="project" value="UniProtKB-UniRule"/>
</dbReference>
<dbReference type="CDD" id="cd01556">
    <property type="entry name" value="EPSP_synthase"/>
    <property type="match status" value="1"/>
</dbReference>
<dbReference type="FunFam" id="3.65.10.10:FF:000003">
    <property type="entry name" value="3-phosphoshikimate 1-carboxyvinyltransferase"/>
    <property type="match status" value="1"/>
</dbReference>
<dbReference type="FunFam" id="3.65.10.10:FF:000004">
    <property type="entry name" value="3-phosphoshikimate 1-carboxyvinyltransferase"/>
    <property type="match status" value="1"/>
</dbReference>
<dbReference type="Gene3D" id="3.65.10.10">
    <property type="entry name" value="Enolpyruvate transferase domain"/>
    <property type="match status" value="2"/>
</dbReference>
<dbReference type="HAMAP" id="MF_00210">
    <property type="entry name" value="EPSP_synth"/>
    <property type="match status" value="1"/>
</dbReference>
<dbReference type="InterPro" id="IPR001986">
    <property type="entry name" value="Enolpyruvate_Tfrase_dom"/>
</dbReference>
<dbReference type="InterPro" id="IPR036968">
    <property type="entry name" value="Enolpyruvate_Tfrase_sf"/>
</dbReference>
<dbReference type="InterPro" id="IPR006264">
    <property type="entry name" value="EPSP_synthase"/>
</dbReference>
<dbReference type="InterPro" id="IPR023193">
    <property type="entry name" value="EPSP_synthase_CS"/>
</dbReference>
<dbReference type="InterPro" id="IPR013792">
    <property type="entry name" value="RNA3'P_cycl/enolpyr_Trfase_a/b"/>
</dbReference>
<dbReference type="NCBIfam" id="TIGR01356">
    <property type="entry name" value="aroA"/>
    <property type="match status" value="1"/>
</dbReference>
<dbReference type="PANTHER" id="PTHR21090">
    <property type="entry name" value="AROM/DEHYDROQUINATE SYNTHASE"/>
    <property type="match status" value="1"/>
</dbReference>
<dbReference type="PANTHER" id="PTHR21090:SF5">
    <property type="entry name" value="PENTAFUNCTIONAL AROM POLYPEPTIDE"/>
    <property type="match status" value="1"/>
</dbReference>
<dbReference type="Pfam" id="PF00275">
    <property type="entry name" value="EPSP_synthase"/>
    <property type="match status" value="1"/>
</dbReference>
<dbReference type="PIRSF" id="PIRSF000505">
    <property type="entry name" value="EPSPS"/>
    <property type="match status" value="1"/>
</dbReference>
<dbReference type="SUPFAM" id="SSF55205">
    <property type="entry name" value="EPT/RTPC-like"/>
    <property type="match status" value="1"/>
</dbReference>
<dbReference type="PROSITE" id="PS00104">
    <property type="entry name" value="EPSP_SYNTHASE_1"/>
    <property type="match status" value="1"/>
</dbReference>
<dbReference type="PROSITE" id="PS00885">
    <property type="entry name" value="EPSP_SYNTHASE_2"/>
    <property type="match status" value="1"/>
</dbReference>
<evidence type="ECO:0000255" key="1">
    <source>
        <dbReference type="HAMAP-Rule" id="MF_00210"/>
    </source>
</evidence>
<reference key="1">
    <citation type="journal article" date="2004" name="Proc. Natl. Acad. Sci. U.S.A.">
        <title>Insights into the evolution of Yersinia pestis through whole-genome comparison with Yersinia pseudotuberculosis.</title>
        <authorList>
            <person name="Chain P.S.G."/>
            <person name="Carniel E."/>
            <person name="Larimer F.W."/>
            <person name="Lamerdin J."/>
            <person name="Stoutland P.O."/>
            <person name="Regala W.M."/>
            <person name="Georgescu A.M."/>
            <person name="Vergez L.M."/>
            <person name="Land M.L."/>
            <person name="Motin V.L."/>
            <person name="Brubaker R.R."/>
            <person name="Fowler J."/>
            <person name="Hinnebusch J."/>
            <person name="Marceau M."/>
            <person name="Medigue C."/>
            <person name="Simonet M."/>
            <person name="Chenal-Francisque V."/>
            <person name="Souza B."/>
            <person name="Dacheux D."/>
            <person name="Elliott J.M."/>
            <person name="Derbise A."/>
            <person name="Hauser L.J."/>
            <person name="Garcia E."/>
        </authorList>
    </citation>
    <scope>NUCLEOTIDE SEQUENCE [LARGE SCALE GENOMIC DNA]</scope>
    <source>
        <strain>IP32953</strain>
    </source>
</reference>
<organism>
    <name type="scientific">Yersinia pseudotuberculosis serotype I (strain IP32953)</name>
    <dbReference type="NCBI Taxonomy" id="273123"/>
    <lineage>
        <taxon>Bacteria</taxon>
        <taxon>Pseudomonadati</taxon>
        <taxon>Pseudomonadota</taxon>
        <taxon>Gammaproteobacteria</taxon>
        <taxon>Enterobacterales</taxon>
        <taxon>Yersiniaceae</taxon>
        <taxon>Yersinia</taxon>
    </lineage>
</organism>
<gene>
    <name evidence="1" type="primary">aroA</name>
    <name type="ordered locus">YPTB1415</name>
</gene>
<feature type="chain" id="PRO_1000012514" description="3-phosphoshikimate 1-carboxyvinyltransferase">
    <location>
        <begin position="1"/>
        <end position="428"/>
    </location>
</feature>
<feature type="active site" description="Proton acceptor" evidence="1">
    <location>
        <position position="314"/>
    </location>
</feature>
<feature type="binding site" evidence="1">
    <location>
        <position position="23"/>
    </location>
    <ligand>
        <name>3-phosphoshikimate</name>
        <dbReference type="ChEBI" id="CHEBI:145989"/>
    </ligand>
</feature>
<feature type="binding site" evidence="1">
    <location>
        <position position="23"/>
    </location>
    <ligand>
        <name>phosphoenolpyruvate</name>
        <dbReference type="ChEBI" id="CHEBI:58702"/>
    </ligand>
</feature>
<feature type="binding site" evidence="1">
    <location>
        <position position="24"/>
    </location>
    <ligand>
        <name>3-phosphoshikimate</name>
        <dbReference type="ChEBI" id="CHEBI:145989"/>
    </ligand>
</feature>
<feature type="binding site" evidence="1">
    <location>
        <position position="28"/>
    </location>
    <ligand>
        <name>3-phosphoshikimate</name>
        <dbReference type="ChEBI" id="CHEBI:145989"/>
    </ligand>
</feature>
<feature type="binding site" evidence="1">
    <location>
        <position position="97"/>
    </location>
    <ligand>
        <name>phosphoenolpyruvate</name>
        <dbReference type="ChEBI" id="CHEBI:58702"/>
    </ligand>
</feature>
<feature type="binding site" evidence="1">
    <location>
        <position position="125"/>
    </location>
    <ligand>
        <name>phosphoenolpyruvate</name>
        <dbReference type="ChEBI" id="CHEBI:58702"/>
    </ligand>
</feature>
<feature type="binding site" evidence="1">
    <location>
        <position position="170"/>
    </location>
    <ligand>
        <name>3-phosphoshikimate</name>
        <dbReference type="ChEBI" id="CHEBI:145989"/>
    </ligand>
</feature>
<feature type="binding site" evidence="1">
    <location>
        <position position="171"/>
    </location>
    <ligand>
        <name>3-phosphoshikimate</name>
        <dbReference type="ChEBI" id="CHEBI:145989"/>
    </ligand>
</feature>
<feature type="binding site" evidence="1">
    <location>
        <position position="172"/>
    </location>
    <ligand>
        <name>3-phosphoshikimate</name>
        <dbReference type="ChEBI" id="CHEBI:145989"/>
    </ligand>
</feature>
<feature type="binding site" evidence="1">
    <location>
        <position position="172"/>
    </location>
    <ligand>
        <name>phosphoenolpyruvate</name>
        <dbReference type="ChEBI" id="CHEBI:58702"/>
    </ligand>
</feature>
<feature type="binding site" evidence="1">
    <location>
        <position position="198"/>
    </location>
    <ligand>
        <name>3-phosphoshikimate</name>
        <dbReference type="ChEBI" id="CHEBI:145989"/>
    </ligand>
</feature>
<feature type="binding site" evidence="1">
    <location>
        <position position="314"/>
    </location>
    <ligand>
        <name>3-phosphoshikimate</name>
        <dbReference type="ChEBI" id="CHEBI:145989"/>
    </ligand>
</feature>
<feature type="binding site" evidence="1">
    <location>
        <position position="337"/>
    </location>
    <ligand>
        <name>3-phosphoshikimate</name>
        <dbReference type="ChEBI" id="CHEBI:145989"/>
    </ligand>
</feature>
<feature type="binding site" evidence="1">
    <location>
        <position position="341"/>
    </location>
    <ligand>
        <name>3-phosphoshikimate</name>
        <dbReference type="ChEBI" id="CHEBI:145989"/>
    </ligand>
</feature>
<feature type="binding site" evidence="1">
    <location>
        <position position="345"/>
    </location>
    <ligand>
        <name>phosphoenolpyruvate</name>
        <dbReference type="ChEBI" id="CHEBI:58702"/>
    </ligand>
</feature>
<feature type="binding site" evidence="1">
    <location>
        <position position="387"/>
    </location>
    <ligand>
        <name>phosphoenolpyruvate</name>
        <dbReference type="ChEBI" id="CHEBI:58702"/>
    </ligand>
</feature>
<feature type="binding site" evidence="1">
    <location>
        <position position="412"/>
    </location>
    <ligand>
        <name>phosphoenolpyruvate</name>
        <dbReference type="ChEBI" id="CHEBI:58702"/>
    </ligand>
</feature>
<keyword id="KW-0028">Amino-acid biosynthesis</keyword>
<keyword id="KW-0057">Aromatic amino acid biosynthesis</keyword>
<keyword id="KW-0963">Cytoplasm</keyword>
<keyword id="KW-0808">Transferase</keyword>
<proteinExistence type="inferred from homology"/>
<accession>Q66CI8</accession>
<name>AROA_YERPS</name>
<protein>
    <recommendedName>
        <fullName evidence="1">3-phosphoshikimate 1-carboxyvinyltransferase</fullName>
        <ecNumber evidence="1">2.5.1.19</ecNumber>
    </recommendedName>
    <alternativeName>
        <fullName evidence="1">5-enolpyruvylshikimate-3-phosphate synthase</fullName>
        <shortName evidence="1">EPSP synthase</shortName>
        <shortName evidence="1">EPSPS</shortName>
    </alternativeName>
</protein>
<comment type="function">
    <text evidence="1">Catalyzes the transfer of the enolpyruvyl moiety of phosphoenolpyruvate (PEP) to the 5-hydroxyl of shikimate-3-phosphate (S3P) to produce enolpyruvyl shikimate-3-phosphate and inorganic phosphate.</text>
</comment>
<comment type="catalytic activity">
    <reaction evidence="1">
        <text>3-phosphoshikimate + phosphoenolpyruvate = 5-O-(1-carboxyvinyl)-3-phosphoshikimate + phosphate</text>
        <dbReference type="Rhea" id="RHEA:21256"/>
        <dbReference type="ChEBI" id="CHEBI:43474"/>
        <dbReference type="ChEBI" id="CHEBI:57701"/>
        <dbReference type="ChEBI" id="CHEBI:58702"/>
        <dbReference type="ChEBI" id="CHEBI:145989"/>
        <dbReference type="EC" id="2.5.1.19"/>
    </reaction>
    <physiologicalReaction direction="left-to-right" evidence="1">
        <dbReference type="Rhea" id="RHEA:21257"/>
    </physiologicalReaction>
</comment>
<comment type="pathway">
    <text evidence="1">Metabolic intermediate biosynthesis; chorismate biosynthesis; chorismate from D-erythrose 4-phosphate and phosphoenolpyruvate: step 6/7.</text>
</comment>
<comment type="subunit">
    <text evidence="1">Monomer.</text>
</comment>
<comment type="subcellular location">
    <subcellularLocation>
        <location evidence="1">Cytoplasm</location>
    </subcellularLocation>
</comment>
<comment type="similarity">
    <text evidence="1">Belongs to the EPSP synthase family.</text>
</comment>